<protein>
    <recommendedName>
        <fullName>Guanylate cyclase soluble subunit beta-1</fullName>
        <shortName>GCS-beta-1</shortName>
        <ecNumber evidence="2">4.6.1.2</ecNumber>
    </recommendedName>
    <alternativeName>
        <fullName>Guanylate cyclase soluble subunit beta-3</fullName>
        <shortName>GCS-beta-3</shortName>
    </alternativeName>
    <alternativeName>
        <fullName>Soluble guanylate cyclase small subunit</fullName>
    </alternativeName>
</protein>
<dbReference type="EC" id="4.6.1.2" evidence="2"/>
<dbReference type="EMBL" id="M22562">
    <property type="protein sequence ID" value="AAA41204.1"/>
    <property type="molecule type" value="mRNA"/>
</dbReference>
<dbReference type="EMBL" id="AB098025">
    <property type="protein sequence ID" value="BAC44989.1"/>
    <property type="molecule type" value="mRNA"/>
</dbReference>
<dbReference type="EMBL" id="BC081840">
    <property type="protein sequence ID" value="AAH81840.1"/>
    <property type="molecule type" value="mRNA"/>
</dbReference>
<dbReference type="PIR" id="A31871">
    <property type="entry name" value="OYRTB1"/>
</dbReference>
<dbReference type="RefSeq" id="NP_036901.2">
    <property type="nucleotide sequence ID" value="NM_012769.2"/>
</dbReference>
<dbReference type="PDB" id="3HLS">
    <property type="method" value="X-ray"/>
    <property type="resolution" value="2.15 A"/>
    <property type="chains" value="A/B/C/D/E/F/G/H=348-409"/>
</dbReference>
<dbReference type="PDBsum" id="3HLS"/>
<dbReference type="SMR" id="P20595"/>
<dbReference type="CORUM" id="P20595"/>
<dbReference type="FunCoup" id="P20595">
    <property type="interactions" value="1853"/>
</dbReference>
<dbReference type="IntAct" id="P20595">
    <property type="interactions" value="3"/>
</dbReference>
<dbReference type="MINT" id="P20595"/>
<dbReference type="STRING" id="10116.ENSRNOP00000062785"/>
<dbReference type="ChEMBL" id="CHEMBL5482988"/>
<dbReference type="DrugCentral" id="P20595"/>
<dbReference type="iPTMnet" id="P20595"/>
<dbReference type="PhosphoSitePlus" id="P20595"/>
<dbReference type="jPOST" id="P20595"/>
<dbReference type="PaxDb" id="10116-ENSRNOP00000062785"/>
<dbReference type="Ensembl" id="ENSRNOT00000064930.3">
    <property type="protein sequence ID" value="ENSRNOP00000062785.1"/>
    <property type="gene ID" value="ENSRNOG00000012060.8"/>
</dbReference>
<dbReference type="GeneID" id="25202"/>
<dbReference type="KEGG" id="rno:25202"/>
<dbReference type="UCSC" id="RGD:2769">
    <property type="organism name" value="rat"/>
</dbReference>
<dbReference type="AGR" id="RGD:2769"/>
<dbReference type="CTD" id="2983"/>
<dbReference type="RGD" id="2769">
    <property type="gene designation" value="Gucy1b1"/>
</dbReference>
<dbReference type="eggNOG" id="KOG4171">
    <property type="taxonomic scope" value="Eukaryota"/>
</dbReference>
<dbReference type="GeneTree" id="ENSGT00940000157483"/>
<dbReference type="HOGENOM" id="CLU_011614_4_0_1"/>
<dbReference type="InParanoid" id="P20595"/>
<dbReference type="OMA" id="SHARCIG"/>
<dbReference type="OrthoDB" id="6127067at2759"/>
<dbReference type="PhylomeDB" id="P20595"/>
<dbReference type="TreeFam" id="TF351403"/>
<dbReference type="BRENDA" id="4.6.1.2">
    <property type="organism ID" value="5301"/>
</dbReference>
<dbReference type="Reactome" id="R-RNO-445355">
    <property type="pathway name" value="Smooth Muscle Contraction"/>
</dbReference>
<dbReference type="EvolutionaryTrace" id="P20595"/>
<dbReference type="PRO" id="PR:P20595"/>
<dbReference type="Proteomes" id="UP000002494">
    <property type="component" value="Chromosome 2"/>
</dbReference>
<dbReference type="Bgee" id="ENSRNOG00000012060">
    <property type="expression patterns" value="Expressed in frontal cortex and 19 other cell types or tissues"/>
</dbReference>
<dbReference type="GO" id="GO:0005829">
    <property type="term" value="C:cytosol"/>
    <property type="evidence" value="ECO:0000304"/>
    <property type="project" value="Reactome"/>
</dbReference>
<dbReference type="GO" id="GO:0098978">
    <property type="term" value="C:glutamatergic synapse"/>
    <property type="evidence" value="ECO:0000314"/>
    <property type="project" value="SynGO"/>
</dbReference>
<dbReference type="GO" id="GO:0008074">
    <property type="term" value="C:guanylate cyclase complex, soluble"/>
    <property type="evidence" value="ECO:0000314"/>
    <property type="project" value="RGD"/>
</dbReference>
<dbReference type="GO" id="GO:0098831">
    <property type="term" value="C:presynaptic active zone cytoplasmic component"/>
    <property type="evidence" value="ECO:0000314"/>
    <property type="project" value="SynGO"/>
</dbReference>
<dbReference type="GO" id="GO:0032991">
    <property type="term" value="C:protein-containing complex"/>
    <property type="evidence" value="ECO:0000314"/>
    <property type="project" value="RGD"/>
</dbReference>
<dbReference type="GO" id="GO:0005525">
    <property type="term" value="F:GTP binding"/>
    <property type="evidence" value="ECO:0007669"/>
    <property type="project" value="UniProtKB-KW"/>
</dbReference>
<dbReference type="GO" id="GO:0004383">
    <property type="term" value="F:guanylate cyclase activity"/>
    <property type="evidence" value="ECO:0000266"/>
    <property type="project" value="RGD"/>
</dbReference>
<dbReference type="GO" id="GO:0020037">
    <property type="term" value="F:heme binding"/>
    <property type="evidence" value="ECO:0000314"/>
    <property type="project" value="RGD"/>
</dbReference>
<dbReference type="GO" id="GO:0051879">
    <property type="term" value="F:Hsp90 protein binding"/>
    <property type="evidence" value="ECO:0000314"/>
    <property type="project" value="RGD"/>
</dbReference>
<dbReference type="GO" id="GO:0046872">
    <property type="term" value="F:metal ion binding"/>
    <property type="evidence" value="ECO:0007669"/>
    <property type="project" value="UniProtKB-KW"/>
</dbReference>
<dbReference type="GO" id="GO:0070026">
    <property type="term" value="F:nitric oxide binding"/>
    <property type="evidence" value="ECO:0000314"/>
    <property type="project" value="RGD"/>
</dbReference>
<dbReference type="GO" id="GO:0044877">
    <property type="term" value="F:protein-containing complex binding"/>
    <property type="evidence" value="ECO:0000314"/>
    <property type="project" value="RGD"/>
</dbReference>
<dbReference type="GO" id="GO:0071732">
    <property type="term" value="P:cellular response to nitric oxide"/>
    <property type="evidence" value="ECO:0000250"/>
    <property type="project" value="UniProtKB"/>
</dbReference>
<dbReference type="GO" id="GO:0006182">
    <property type="term" value="P:cGMP biosynthetic process"/>
    <property type="evidence" value="ECO:0000266"/>
    <property type="project" value="RGD"/>
</dbReference>
<dbReference type="GO" id="GO:0019934">
    <property type="term" value="P:cGMP-mediated signaling"/>
    <property type="evidence" value="ECO:0000318"/>
    <property type="project" value="GO_Central"/>
</dbReference>
<dbReference type="GO" id="GO:0038060">
    <property type="term" value="P:nitric oxide-cGMP-mediated signaling"/>
    <property type="evidence" value="ECO:0000250"/>
    <property type="project" value="UniProtKB"/>
</dbReference>
<dbReference type="GO" id="GO:0070482">
    <property type="term" value="P:response to oxygen levels"/>
    <property type="evidence" value="ECO:0000318"/>
    <property type="project" value="GO_Central"/>
</dbReference>
<dbReference type="CDD" id="cd07302">
    <property type="entry name" value="CHD"/>
    <property type="match status" value="1"/>
</dbReference>
<dbReference type="FunFam" id="3.30.70.1230:FF:000005">
    <property type="entry name" value="Guanylate cyclase soluble subunit beta-1"/>
    <property type="match status" value="1"/>
</dbReference>
<dbReference type="FunFam" id="3.90.1520.10:FF:000001">
    <property type="entry name" value="Guanylate cyclase soluble subunit beta-1"/>
    <property type="match status" value="1"/>
</dbReference>
<dbReference type="FunFam" id="3.30.450.260:FF:000001">
    <property type="entry name" value="guanylate cyclase soluble subunit beta-1 isoform X1"/>
    <property type="match status" value="1"/>
</dbReference>
<dbReference type="Gene3D" id="6.10.250.780">
    <property type="match status" value="1"/>
</dbReference>
<dbReference type="Gene3D" id="3.90.1520.10">
    <property type="entry name" value="H-NOX domain"/>
    <property type="match status" value="1"/>
</dbReference>
<dbReference type="Gene3D" id="3.30.450.260">
    <property type="entry name" value="Haem NO binding associated domain"/>
    <property type="match status" value="1"/>
</dbReference>
<dbReference type="Gene3D" id="3.30.70.1230">
    <property type="entry name" value="Nucleotide cyclase"/>
    <property type="match status" value="1"/>
</dbReference>
<dbReference type="InterPro" id="IPR001054">
    <property type="entry name" value="A/G_cyclase"/>
</dbReference>
<dbReference type="InterPro" id="IPR018297">
    <property type="entry name" value="A/G_cyclase_CS"/>
</dbReference>
<dbReference type="InterPro" id="IPR038158">
    <property type="entry name" value="H-NOX_domain_sf"/>
</dbReference>
<dbReference type="InterPro" id="IPR011644">
    <property type="entry name" value="Heme_NO-bd"/>
</dbReference>
<dbReference type="InterPro" id="IPR011645">
    <property type="entry name" value="HNOB_dom_associated"/>
</dbReference>
<dbReference type="InterPro" id="IPR042463">
    <property type="entry name" value="HNOB_dom_associated_sf"/>
</dbReference>
<dbReference type="InterPro" id="IPR024096">
    <property type="entry name" value="NO_sig/Golgi_transp_ligand-bd"/>
</dbReference>
<dbReference type="InterPro" id="IPR029787">
    <property type="entry name" value="Nucleotide_cyclase"/>
</dbReference>
<dbReference type="PANTHER" id="PTHR45655:SF2">
    <property type="entry name" value="GUANYLATE CYCLASE SOLUBLE SUBUNIT BETA-1"/>
    <property type="match status" value="1"/>
</dbReference>
<dbReference type="PANTHER" id="PTHR45655">
    <property type="entry name" value="GUANYLATE CYCLASE SOLUBLE SUBUNIT BETA-2"/>
    <property type="match status" value="1"/>
</dbReference>
<dbReference type="Pfam" id="PF00211">
    <property type="entry name" value="Guanylate_cyc"/>
    <property type="match status" value="1"/>
</dbReference>
<dbReference type="Pfam" id="PF07700">
    <property type="entry name" value="HNOB"/>
    <property type="match status" value="1"/>
</dbReference>
<dbReference type="Pfam" id="PF07701">
    <property type="entry name" value="HNOBA"/>
    <property type="match status" value="1"/>
</dbReference>
<dbReference type="SMART" id="SM00044">
    <property type="entry name" value="CYCc"/>
    <property type="match status" value="1"/>
</dbReference>
<dbReference type="SUPFAM" id="SSF111126">
    <property type="entry name" value="Ligand-binding domain in the NO signalling and Golgi transport"/>
    <property type="match status" value="1"/>
</dbReference>
<dbReference type="SUPFAM" id="SSF55073">
    <property type="entry name" value="Nucleotide cyclase"/>
    <property type="match status" value="1"/>
</dbReference>
<dbReference type="PROSITE" id="PS00452">
    <property type="entry name" value="GUANYLATE_CYCLASE_1"/>
    <property type="match status" value="1"/>
</dbReference>
<dbReference type="PROSITE" id="PS50125">
    <property type="entry name" value="GUANYLATE_CYCLASE_2"/>
    <property type="match status" value="1"/>
</dbReference>
<organism>
    <name type="scientific">Rattus norvegicus</name>
    <name type="common">Rat</name>
    <dbReference type="NCBI Taxonomy" id="10116"/>
    <lineage>
        <taxon>Eukaryota</taxon>
        <taxon>Metazoa</taxon>
        <taxon>Chordata</taxon>
        <taxon>Craniata</taxon>
        <taxon>Vertebrata</taxon>
        <taxon>Euteleostomi</taxon>
        <taxon>Mammalia</taxon>
        <taxon>Eutheria</taxon>
        <taxon>Euarchontoglires</taxon>
        <taxon>Glires</taxon>
        <taxon>Rodentia</taxon>
        <taxon>Myomorpha</taxon>
        <taxon>Muroidea</taxon>
        <taxon>Muridae</taxon>
        <taxon>Murinae</taxon>
        <taxon>Rattus</taxon>
    </lineage>
</organism>
<sequence length="619" mass="70456">MYGFVNHALELLVIRNYGPEVWEDIKKEAQLDEEGQFLVRIIYDDSKTYDLVAAASKVLNLNAGEILQMFGKMFFVFCQESGYDTILRVLGSNVREFLQNLDALHDHLATIYPGMRAPSFRCTDAEKGKGLILHYYSEREGLQDIVIGIIKTVAQQIHGTEIDMKVIQQRSEECDHTQFLIEEKESKEEDFYEDLDRFEENGTQDSRISPYTFCKAFPFHIIFDRDLVVTQCGNAIYRVLPQLQPGKCSLLSVFSLVRPHIDISFHGILSHINTVFVLRSKEGLLDVEKLECEDELTGAEISCLRLKGQMIYLPEADSILFLCSPSVMNLDDLTRRGLYLSDIPLHDATRDLVLLGEQFREEYKLTQELEILTDRLQLTLRALEDEKKKTDTLLYSVLPPSVANELRHKRPVPAKRYDNVTILFSGIVGFNAFCSKHASGEGAMKIVNLLNDLYTRFDTLTDSRKNPFVYKVETVGDKYMTVSGLPEPCIHHARSICHLALDMMEIAGQVQVDGESVQITIGIHTGEVVTGVIGQRMPRYCLFGNTVNLTSRTETTGEKGKINVSEYTYRCLMSPENSDPQFHLEHRGPVSMKGKKEPMQVWFLSRKNTGTEETNQDEN</sequence>
<proteinExistence type="evidence at protein level"/>
<feature type="chain" id="PRO_0000074118" description="Guanylate cyclase soluble subunit beta-1">
    <location>
        <begin position="1"/>
        <end position="619"/>
    </location>
</feature>
<feature type="domain" description="Guanylate cyclase" evidence="3">
    <location>
        <begin position="421"/>
        <end position="554"/>
    </location>
</feature>
<feature type="binding site" description="proximal binding residue" evidence="1">
    <location>
        <position position="105"/>
    </location>
    <ligand>
        <name>heme</name>
        <dbReference type="ChEBI" id="CHEBI:30413"/>
    </ligand>
    <ligandPart>
        <name>Fe</name>
        <dbReference type="ChEBI" id="CHEBI:18248"/>
    </ligandPart>
</feature>
<feature type="sequence conflict" description="In Ref. 1; AAA41204." evidence="5" ref="1">
    <original>E</original>
    <variation>Q</variation>
    <location>
        <position position="33"/>
    </location>
</feature>
<feature type="sequence conflict" description="In Ref. 1; AAA41204." evidence="5" ref="1">
    <original>D</original>
    <variation>H</variation>
    <location>
        <position position="45"/>
    </location>
</feature>
<feature type="helix" evidence="6">
    <location>
        <begin position="349"/>
        <end position="396"/>
    </location>
</feature>
<feature type="helix" evidence="6">
    <location>
        <begin position="400"/>
        <end position="407"/>
    </location>
</feature>
<name>GCYB1_RAT</name>
<gene>
    <name type="primary">Gucy1b1</name>
    <name type="synonym">Guc1b3</name>
    <name type="synonym">Gucy1b3</name>
</gene>
<comment type="function">
    <text evidence="1">Mediates responses to nitric oxide (NO) by catalyzing the biosynthesis of the signaling molecule cGMP.</text>
</comment>
<comment type="catalytic activity">
    <reaction evidence="2">
        <text>GTP = 3',5'-cyclic GMP + diphosphate</text>
        <dbReference type="Rhea" id="RHEA:13665"/>
        <dbReference type="ChEBI" id="CHEBI:33019"/>
        <dbReference type="ChEBI" id="CHEBI:37565"/>
        <dbReference type="ChEBI" id="CHEBI:57746"/>
        <dbReference type="EC" id="4.6.1.2"/>
    </reaction>
</comment>
<comment type="cofactor">
    <cofactor evidence="1">
        <name>heme</name>
        <dbReference type="ChEBI" id="CHEBI:30413"/>
    </cofactor>
    <text evidence="1">Binds 1 or 2 heme groups per heterodimer. Heme is required for responding to nitric oxide, but not for catalytic activity.</text>
</comment>
<comment type="activity regulation">
    <text evidence="2">Activated by nitric oxide in the presence of magnesium or manganese ions.</text>
</comment>
<comment type="subunit">
    <text evidence="2 4">The active enzyme is formed by a heterodimer of an alpha and a beta subunit. Homotetramer; dimer of dimers (in vitro) (PubMed:20105301). Heterodimer with GUCY1A1. Can also form inactive homodimers in vitro (By similarity).</text>
</comment>
<comment type="interaction">
    <interactant intactId="EBI-7980539">
        <id>P20595</id>
    </interactant>
    <interactant intactId="EBI-375655">
        <id>P31016</id>
        <label>Dlg4</label>
    </interactant>
    <organismsDiffer>false</organismsDiffer>
    <experiments>2</experiments>
</comment>
<comment type="subcellular location">
    <subcellularLocation>
        <location evidence="1">Cytoplasm</location>
    </subcellularLocation>
</comment>
<comment type="tissue specificity">
    <text>Lung and brain.</text>
</comment>
<comment type="miscellaneous">
    <text>There are two types of guanylate cyclases: soluble forms and membrane-associated receptor forms.</text>
</comment>
<comment type="similarity">
    <text evidence="3">Belongs to the adenylyl cyclase class-4/guanylyl cyclase family.</text>
</comment>
<reference key="1">
    <citation type="journal article" date="1988" name="Biochem. Biophys. Res. Commun.">
        <title>Molecular cloning of a cDNA coding for 70 kilodalton subunit of soluble guanylate cyclase from rat lung.</title>
        <authorList>
            <person name="Nakane M."/>
            <person name="Saheki S."/>
            <person name="Kuno T."/>
            <person name="Ishii K."/>
            <person name="Murad F."/>
        </authorList>
    </citation>
    <scope>NUCLEOTIDE SEQUENCE [MRNA]</scope>
</reference>
<reference key="2">
    <citation type="submission" date="2002-12" db="EMBL/GenBank/DDBJ databases">
        <title>Rat soluble guanylyl cyclase beta 1 subunit.</title>
        <authorList>
            <person name="Nakamura I."/>
            <person name="Suzuki N."/>
        </authorList>
    </citation>
    <scope>NUCLEOTIDE SEQUENCE [MRNA]</scope>
    <source>
        <tissue>Brain cortex</tissue>
    </source>
</reference>
<reference key="3">
    <citation type="journal article" date="2004" name="Genome Res.">
        <title>The status, quality, and expansion of the NIH full-length cDNA project: the Mammalian Gene Collection (MGC).</title>
        <authorList>
            <consortium name="The MGC Project Team"/>
        </authorList>
    </citation>
    <scope>NUCLEOTIDE SEQUENCE [LARGE SCALE MRNA]</scope>
    <source>
        <tissue>Heart</tissue>
    </source>
</reference>
<reference key="4">
    <citation type="journal article" date="2010" name="BMC Struct. Biol.">
        <title>Crystal structure of the signaling helix coiled-coil domain of the beta1 subunit of the soluble guanylyl cyclase.</title>
        <authorList>
            <person name="Ma X."/>
            <person name="Beuve A."/>
            <person name="van den Akker F."/>
        </authorList>
    </citation>
    <scope>X-RAY CRYSTALLOGRAPHY (2.15 ANGSTROMS) OF 348-409</scope>
    <scope>SUBUNIT</scope>
</reference>
<keyword id="KW-0002">3D-structure</keyword>
<keyword id="KW-0141">cGMP biosynthesis</keyword>
<keyword id="KW-0963">Cytoplasm</keyword>
<keyword id="KW-0342">GTP-binding</keyword>
<keyword id="KW-0349">Heme</keyword>
<keyword id="KW-0408">Iron</keyword>
<keyword id="KW-0456">Lyase</keyword>
<keyword id="KW-0479">Metal-binding</keyword>
<keyword id="KW-0547">Nucleotide-binding</keyword>
<keyword id="KW-1185">Reference proteome</keyword>
<evidence type="ECO:0000250" key="1">
    <source>
        <dbReference type="UniProtKB" id="P16068"/>
    </source>
</evidence>
<evidence type="ECO:0000250" key="2">
    <source>
        <dbReference type="UniProtKB" id="Q02153"/>
    </source>
</evidence>
<evidence type="ECO:0000255" key="3">
    <source>
        <dbReference type="PROSITE-ProRule" id="PRU00099"/>
    </source>
</evidence>
<evidence type="ECO:0000269" key="4">
    <source>
    </source>
</evidence>
<evidence type="ECO:0000305" key="5"/>
<evidence type="ECO:0007829" key="6">
    <source>
        <dbReference type="PDB" id="3HLS"/>
    </source>
</evidence>
<accession>P20595</accession>
<accession>Q8CH88</accession>